<reference key="1">
    <citation type="journal article" date="2008" name="Proc. Natl. Acad. Sci. U.S.A.">
        <title>Complete genome of the uncultured termite group 1 bacteria in a single host protist cell.</title>
        <authorList>
            <person name="Hongoh Y."/>
            <person name="Sharma V.K."/>
            <person name="Prakash T."/>
            <person name="Noda S."/>
            <person name="Taylor T.D."/>
            <person name="Kudo T."/>
            <person name="Sakaki Y."/>
            <person name="Toyoda A."/>
            <person name="Hattori M."/>
            <person name="Ohkuma M."/>
        </authorList>
    </citation>
    <scope>NUCLEOTIDE SEQUENCE [LARGE SCALE GENOMIC DNA]</scope>
</reference>
<comment type="function">
    <text evidence="1">Regulates the transcription of the pyrimidine nucleotide (pyr) operon in response to exogenous pyrimidines.</text>
</comment>
<comment type="function">
    <text evidence="1">Also displays a weak uracil phosphoribosyltransferase activity which is not physiologically significant.</text>
</comment>
<comment type="catalytic activity">
    <reaction evidence="1">
        <text>UMP + diphosphate = 5-phospho-alpha-D-ribose 1-diphosphate + uracil</text>
        <dbReference type="Rhea" id="RHEA:13017"/>
        <dbReference type="ChEBI" id="CHEBI:17568"/>
        <dbReference type="ChEBI" id="CHEBI:33019"/>
        <dbReference type="ChEBI" id="CHEBI:57865"/>
        <dbReference type="ChEBI" id="CHEBI:58017"/>
        <dbReference type="EC" id="2.4.2.9"/>
    </reaction>
</comment>
<comment type="similarity">
    <text evidence="1">Belongs to the purine/pyrimidine phosphoribosyltransferase family. PyrR subfamily.</text>
</comment>
<keyword id="KW-0328">Glycosyltransferase</keyword>
<keyword id="KW-0804">Transcription</keyword>
<keyword id="KW-0805">Transcription regulation</keyword>
<keyword id="KW-0808">Transferase</keyword>
<name>PYRR_ENDTX</name>
<proteinExistence type="inferred from homology"/>
<sequence>MSDIILDSKSFQSAVSKISREISDNNKNIREVAIIGIQNKGVFLAKRILAEIAKLAGIGRSLIPFGTLDITLYRDDLDDLGSKIPVIKDTVIPFDTSRKNIILIDDVLYTGRTVRAALDVLMDFGRPKSIQLAVLIDRGFRELPIEAKYIGIRYQSEELIKVECKETDGVDRVTFIK</sequence>
<evidence type="ECO:0000255" key="1">
    <source>
        <dbReference type="HAMAP-Rule" id="MF_01219"/>
    </source>
</evidence>
<dbReference type="EC" id="2.4.2.9" evidence="1"/>
<dbReference type="EMBL" id="AP009510">
    <property type="protein sequence ID" value="BAG14232.1"/>
    <property type="molecule type" value="Genomic_DNA"/>
</dbReference>
<dbReference type="RefSeq" id="WP_015423753.1">
    <property type="nucleotide sequence ID" value="NC_020419.1"/>
</dbReference>
<dbReference type="SMR" id="B1GYY9"/>
<dbReference type="STRING" id="471821.TGRD_749"/>
<dbReference type="KEGG" id="rsd:TGRD_749"/>
<dbReference type="PATRIC" id="fig|471821.5.peg.1287"/>
<dbReference type="HOGENOM" id="CLU_094234_2_1_0"/>
<dbReference type="Proteomes" id="UP000001691">
    <property type="component" value="Chromosome"/>
</dbReference>
<dbReference type="GO" id="GO:0004845">
    <property type="term" value="F:uracil phosphoribosyltransferase activity"/>
    <property type="evidence" value="ECO:0007669"/>
    <property type="project" value="UniProtKB-UniRule"/>
</dbReference>
<dbReference type="GO" id="GO:0006355">
    <property type="term" value="P:regulation of DNA-templated transcription"/>
    <property type="evidence" value="ECO:0007669"/>
    <property type="project" value="UniProtKB-UniRule"/>
</dbReference>
<dbReference type="CDD" id="cd06223">
    <property type="entry name" value="PRTases_typeI"/>
    <property type="match status" value="1"/>
</dbReference>
<dbReference type="FunFam" id="3.40.50.2020:FF:000020">
    <property type="entry name" value="Bifunctional protein PyrR"/>
    <property type="match status" value="1"/>
</dbReference>
<dbReference type="Gene3D" id="3.40.50.2020">
    <property type="match status" value="1"/>
</dbReference>
<dbReference type="HAMAP" id="MF_01219">
    <property type="entry name" value="PyrR"/>
    <property type="match status" value="1"/>
</dbReference>
<dbReference type="InterPro" id="IPR000836">
    <property type="entry name" value="PRibTrfase_dom"/>
</dbReference>
<dbReference type="InterPro" id="IPR029057">
    <property type="entry name" value="PRTase-like"/>
</dbReference>
<dbReference type="InterPro" id="IPR023050">
    <property type="entry name" value="PyrR"/>
</dbReference>
<dbReference type="InterPro" id="IPR050137">
    <property type="entry name" value="PyrR_bifunctional"/>
</dbReference>
<dbReference type="NCBIfam" id="NF003549">
    <property type="entry name" value="PRK05205.1-5"/>
    <property type="match status" value="1"/>
</dbReference>
<dbReference type="PANTHER" id="PTHR11608">
    <property type="entry name" value="BIFUNCTIONAL PROTEIN PYRR"/>
    <property type="match status" value="1"/>
</dbReference>
<dbReference type="PANTHER" id="PTHR11608:SF0">
    <property type="entry name" value="BIFUNCTIONAL PROTEIN PYRR"/>
    <property type="match status" value="1"/>
</dbReference>
<dbReference type="Pfam" id="PF00156">
    <property type="entry name" value="Pribosyltran"/>
    <property type="match status" value="1"/>
</dbReference>
<dbReference type="SUPFAM" id="SSF53271">
    <property type="entry name" value="PRTase-like"/>
    <property type="match status" value="1"/>
</dbReference>
<accession>B1GYY9</accession>
<feature type="chain" id="PRO_1000139216" description="Bifunctional protein PyrR">
    <location>
        <begin position="1"/>
        <end position="177"/>
    </location>
</feature>
<feature type="short sequence motif" description="PRPP-binding" evidence="1">
    <location>
        <begin position="101"/>
        <end position="113"/>
    </location>
</feature>
<gene>
    <name evidence="1" type="primary">pyrR</name>
    <name type="ordered locus">TGRD_749</name>
</gene>
<protein>
    <recommendedName>
        <fullName evidence="1">Bifunctional protein PyrR</fullName>
    </recommendedName>
    <domain>
        <recommendedName>
            <fullName evidence="1">Pyrimidine operon regulatory protein</fullName>
        </recommendedName>
    </domain>
    <domain>
        <recommendedName>
            <fullName evidence="1">Uracil phosphoribosyltransferase</fullName>
            <shortName evidence="1">UPRTase</shortName>
            <ecNumber evidence="1">2.4.2.9</ecNumber>
        </recommendedName>
    </domain>
</protein>
<organism>
    <name type="scientific">Endomicrobium trichonymphae</name>
    <dbReference type="NCBI Taxonomy" id="1408204"/>
    <lineage>
        <taxon>Bacteria</taxon>
        <taxon>Pseudomonadati</taxon>
        <taxon>Elusimicrobiota</taxon>
        <taxon>Endomicrobiia</taxon>
        <taxon>Endomicrobiales</taxon>
        <taxon>Endomicrobiaceae</taxon>
        <taxon>Candidatus Endomicrobiellum</taxon>
    </lineage>
</organism>